<comment type="function">
    <text>Could enhance the fertilizing capacity of spermatozoa upon interaction with heparin-like glycosaminoglycans present in the female genital tract.</text>
</comment>
<comment type="subunit">
    <text>One glycoform exists as a monomer while the other forms a heterotetramer with HSP-2 and binds heparin.</text>
</comment>
<comment type="subcellular location">
    <subcellularLocation>
        <location>Secreted</location>
    </subcellularLocation>
</comment>
<comment type="tissue specificity">
    <text>Major component of seminal plasma.</text>
</comment>
<comment type="PTM">
    <text evidence="2">O-glycosylated on Thr. There are two forms of HSP-1 which probably differ in the amount of sialylation of polysaccharide.</text>
</comment>
<comment type="similarity">
    <text evidence="3">Belongs to the seminal plasma protein family.</text>
</comment>
<keyword id="KW-0903">Direct protein sequencing</keyword>
<keyword id="KW-1015">Disulfide bond</keyword>
<keyword id="KW-0278">Fertilization</keyword>
<keyword id="KW-0325">Glycoprotein</keyword>
<keyword id="KW-0358">Heparin-binding</keyword>
<keyword id="KW-1185">Reference proteome</keyword>
<keyword id="KW-0677">Repeat</keyword>
<keyword id="KW-0964">Secreted</keyword>
<feature type="chain" id="PRO_0000158526" description="Seminal plasma protein HSP-1">
    <location>
        <begin position="1"/>
        <end position="120"/>
    </location>
</feature>
<feature type="repeat" description="1">
    <location>
        <begin position="1"/>
        <end position="13"/>
    </location>
</feature>
<feature type="repeat" description="2">
    <location>
        <begin position="16"/>
        <end position="28"/>
    </location>
</feature>
<feature type="domain" description="Fibronectin type-II 1" evidence="1">
    <location>
        <begin position="29"/>
        <end position="73"/>
    </location>
</feature>
<feature type="domain" description="Fibronectin type-II 2" evidence="1">
    <location>
        <begin position="74"/>
        <end position="120"/>
    </location>
</feature>
<feature type="region of interest" description="2 X approximate repeats">
    <location>
        <begin position="1"/>
        <end position="28"/>
    </location>
</feature>
<feature type="glycosylation site" description="O-linked (GalNAc...) threonine" evidence="2">
    <location>
        <position position="5"/>
    </location>
</feature>
<feature type="glycosylation site" description="O-linked (GalNAc...) threonine" evidence="2">
    <location>
        <position position="12"/>
    </location>
</feature>
<feature type="glycosylation site" description="O-linked (GalNAc...) threonine" evidence="2">
    <location>
        <position position="22"/>
    </location>
</feature>
<feature type="glycosylation site" description="O-linked (GalNAc...) threonine" evidence="2">
    <location>
        <position position="27"/>
    </location>
</feature>
<feature type="disulfide bond">
    <location>
        <begin position="34"/>
        <end position="58"/>
    </location>
</feature>
<feature type="disulfide bond">
    <location>
        <begin position="48"/>
        <end position="71"/>
    </location>
</feature>
<feature type="disulfide bond">
    <location>
        <begin position="79"/>
        <end position="105"/>
    </location>
</feature>
<feature type="disulfide bond">
    <location>
        <begin position="93"/>
        <end position="120"/>
    </location>
</feature>
<proteinExistence type="evidence at protein level"/>
<sequence length="120" mass="13905">DLQTTGADHSATVNPDQQLIMTKHSATVTPENKCVFPFNYRGYRYYDCTRTDSFYRWCSLTGTYSGSWKYCAATDYAKCAFPFVYRGQTYDRCTTDGSLFRISWCSVTPNYDHHGAWKYC</sequence>
<protein>
    <recommendedName>
        <fullName>Seminal plasma protein HSP-1</fullName>
    </recommendedName>
</protein>
<dbReference type="PIR" id="S58424">
    <property type="entry name" value="S58424"/>
</dbReference>
<dbReference type="SMR" id="P81121"/>
<dbReference type="STRING" id="9796.ENSECAP00000020809"/>
<dbReference type="iPTMnet" id="P81121"/>
<dbReference type="PaxDb" id="9796-ENSECAP00000020809"/>
<dbReference type="HOGENOM" id="CLU_126630_0_0_1"/>
<dbReference type="InParanoid" id="P81121"/>
<dbReference type="Proteomes" id="UP000002281">
    <property type="component" value="Unplaced"/>
</dbReference>
<dbReference type="GO" id="GO:0009986">
    <property type="term" value="C:cell surface"/>
    <property type="evidence" value="ECO:0000318"/>
    <property type="project" value="GO_Central"/>
</dbReference>
<dbReference type="GO" id="GO:0005615">
    <property type="term" value="C:extracellular space"/>
    <property type="evidence" value="ECO:0007669"/>
    <property type="project" value="InterPro"/>
</dbReference>
<dbReference type="GO" id="GO:0008201">
    <property type="term" value="F:heparin binding"/>
    <property type="evidence" value="ECO:0000318"/>
    <property type="project" value="GO_Central"/>
</dbReference>
<dbReference type="GO" id="GO:0007338">
    <property type="term" value="P:single fertilization"/>
    <property type="evidence" value="ECO:0007669"/>
    <property type="project" value="UniProtKB-KW"/>
</dbReference>
<dbReference type="GO" id="GO:0048240">
    <property type="term" value="P:sperm capacitation"/>
    <property type="evidence" value="ECO:0000318"/>
    <property type="project" value="GO_Central"/>
</dbReference>
<dbReference type="CDD" id="cd00062">
    <property type="entry name" value="FN2"/>
    <property type="match status" value="1"/>
</dbReference>
<dbReference type="FunFam" id="2.10.10.10:FF:000003">
    <property type="entry name" value="binder of sperm protein homolog 1"/>
    <property type="match status" value="1"/>
</dbReference>
<dbReference type="FunFam" id="2.10.10.10:FF:000005">
    <property type="entry name" value="Epididymal sperm binding protein 1"/>
    <property type="match status" value="1"/>
</dbReference>
<dbReference type="Gene3D" id="2.10.10.10">
    <property type="entry name" value="Fibronectin, type II, collagen-binding"/>
    <property type="match status" value="2"/>
</dbReference>
<dbReference type="InterPro" id="IPR000562">
    <property type="entry name" value="FN_type2_dom"/>
</dbReference>
<dbReference type="InterPro" id="IPR036943">
    <property type="entry name" value="FN_type2_sf"/>
</dbReference>
<dbReference type="InterPro" id="IPR013806">
    <property type="entry name" value="Kringle-like"/>
</dbReference>
<dbReference type="InterPro" id="IPR016356">
    <property type="entry name" value="Seminal_plasma_PDC-109-like"/>
</dbReference>
<dbReference type="InterPro" id="IPR051666">
    <property type="entry name" value="SP_Capacitation_Regulator"/>
</dbReference>
<dbReference type="PANTHER" id="PTHR22918">
    <property type="entry name" value="SEMINAL PLASMA PROTEIN"/>
    <property type="match status" value="1"/>
</dbReference>
<dbReference type="PANTHER" id="PTHR22918:SF3">
    <property type="entry name" value="SEMINAL PLASMA PROTEIN HSP-1"/>
    <property type="match status" value="1"/>
</dbReference>
<dbReference type="Pfam" id="PF00040">
    <property type="entry name" value="fn2"/>
    <property type="match status" value="2"/>
</dbReference>
<dbReference type="PIRSF" id="PIRSF002541">
    <property type="entry name" value="Seminal_plasma_PDC-109"/>
    <property type="match status" value="1"/>
</dbReference>
<dbReference type="PRINTS" id="PR00013">
    <property type="entry name" value="FNTYPEII"/>
</dbReference>
<dbReference type="SMART" id="SM00059">
    <property type="entry name" value="FN2"/>
    <property type="match status" value="2"/>
</dbReference>
<dbReference type="SUPFAM" id="SSF57440">
    <property type="entry name" value="Kringle-like"/>
    <property type="match status" value="2"/>
</dbReference>
<dbReference type="PROSITE" id="PS00023">
    <property type="entry name" value="FN2_1"/>
    <property type="match status" value="1"/>
</dbReference>
<dbReference type="PROSITE" id="PS51092">
    <property type="entry name" value="FN2_2"/>
    <property type="match status" value="2"/>
</dbReference>
<name>SP1_HORSE</name>
<accession>P81121</accession>
<organism>
    <name type="scientific">Equus caballus</name>
    <name type="common">Horse</name>
    <dbReference type="NCBI Taxonomy" id="9796"/>
    <lineage>
        <taxon>Eukaryota</taxon>
        <taxon>Metazoa</taxon>
        <taxon>Chordata</taxon>
        <taxon>Craniata</taxon>
        <taxon>Vertebrata</taxon>
        <taxon>Euteleostomi</taxon>
        <taxon>Mammalia</taxon>
        <taxon>Eutheria</taxon>
        <taxon>Laurasiatheria</taxon>
        <taxon>Perissodactyla</taxon>
        <taxon>Equidae</taxon>
        <taxon>Equus</taxon>
    </lineage>
</organism>
<evidence type="ECO:0000255" key="1">
    <source>
        <dbReference type="PROSITE-ProRule" id="PRU00479"/>
    </source>
</evidence>
<evidence type="ECO:0000269" key="2">
    <source>
    </source>
</evidence>
<evidence type="ECO:0000305" key="3"/>
<reference key="1">
    <citation type="journal article" date="1995" name="Biochem. J.">
        <title>Amino acid sequence of HSP-1, a major protein of stallion seminal plasma: effect of glycosylation on its heparin- and gelatin-binding capabilities.</title>
        <authorList>
            <person name="Calvete J.J."/>
            <person name="Mann K."/>
            <person name="Schaefer W."/>
            <person name="Sanz L."/>
            <person name="Reinert M."/>
            <person name="Nessau S."/>
            <person name="Raida M."/>
            <person name="Toepfer-Petersen E."/>
        </authorList>
    </citation>
    <scope>PROTEIN SEQUENCE</scope>
    <scope>GLYCOSYLATION AT THR-5; THR-12; THR-22 AND THR-27</scope>
    <source>
        <tissue>Seminal plasma</tissue>
    </source>
</reference>
<reference key="2">
    <citation type="journal article" date="1997" name="FEBS Lett.">
        <title>Isolation and characterization of heparin- and phosphorylcholine-binding proteins of boar and stallion seminal plasma. Primary structure of porcine pB1.</title>
        <authorList>
            <person name="Calvete J.J."/>
            <person name="Raida M."/>
            <person name="Gentzel M."/>
            <person name="Urbanke C."/>
            <person name="Sanz L."/>
            <person name="Toepfer-Petersen E."/>
        </authorList>
    </citation>
    <scope>SEQUENCE REVISION TO 67-69</scope>
    <source>
        <tissue>Seminal plasma</tissue>
    </source>
</reference>